<protein>
    <recommendedName>
        <fullName>Cdc42 homolog</fullName>
        <ecNumber evidence="3 4">3.6.5.2</ecNumber>
    </recommendedName>
</protein>
<feature type="chain" id="PRO_0000312821" description="Cdc42 homolog" evidence="5">
    <location>
        <begin position="1"/>
        <end position="188"/>
    </location>
</feature>
<feature type="propeptide" id="PRO_0000312822" description="Removed in mature form" evidence="5">
    <location>
        <begin position="189"/>
        <end position="191"/>
    </location>
</feature>
<feature type="short sequence motif" description="Effector region" evidence="6">
    <location>
        <begin position="32"/>
        <end position="40"/>
    </location>
</feature>
<feature type="binding site" evidence="5">
    <location>
        <begin position="10"/>
        <end position="17"/>
    </location>
    <ligand>
        <name>GTP</name>
        <dbReference type="ChEBI" id="CHEBI:37565"/>
    </ligand>
</feature>
<feature type="binding site" evidence="5">
    <location>
        <begin position="57"/>
        <end position="61"/>
    </location>
    <ligand>
        <name>GTP</name>
        <dbReference type="ChEBI" id="CHEBI:37565"/>
    </ligand>
</feature>
<feature type="binding site" evidence="5">
    <location>
        <begin position="115"/>
        <end position="118"/>
    </location>
    <ligand>
        <name>GTP</name>
        <dbReference type="ChEBI" id="CHEBI:37565"/>
    </ligand>
</feature>
<feature type="modified residue" description="Cysteine methyl ester" evidence="5">
    <location>
        <position position="188"/>
    </location>
</feature>
<feature type="lipid moiety-binding region" description="S-geranylgeranyl cysteine" evidence="5">
    <location>
        <position position="188"/>
    </location>
</feature>
<dbReference type="EC" id="3.6.5.2" evidence="3 4"/>
<dbReference type="EMBL" id="CH379064">
    <property type="protein sequence ID" value="EAL31624.1"/>
    <property type="status" value="ALT_SEQ"/>
    <property type="molecule type" value="Genomic_DNA"/>
</dbReference>
<dbReference type="RefSeq" id="XP_001354570.1">
    <property type="nucleotide sequence ID" value="XM_001354534.3"/>
</dbReference>
<dbReference type="RefSeq" id="XP_015041468.1">
    <property type="nucleotide sequence ID" value="XM_015185982.1"/>
</dbReference>
<dbReference type="SMR" id="Q29HY3"/>
<dbReference type="FunCoup" id="Q29HY3">
    <property type="interactions" value="2095"/>
</dbReference>
<dbReference type="STRING" id="46245.Q29HY3"/>
<dbReference type="EnsemblMetazoa" id="FBtr0287265">
    <property type="protein sequence ID" value="FBpp0285703"/>
    <property type="gene ID" value="FBgn0071730"/>
</dbReference>
<dbReference type="EnsemblMetazoa" id="FBtr0367625">
    <property type="protein sequence ID" value="FBpp0330542"/>
    <property type="gene ID" value="FBgn0071730"/>
</dbReference>
<dbReference type="GeneID" id="4814629"/>
<dbReference type="KEGG" id="dpo:4814629"/>
<dbReference type="CTD" id="998"/>
<dbReference type="eggNOG" id="KOG0393">
    <property type="taxonomic scope" value="Eukaryota"/>
</dbReference>
<dbReference type="HOGENOM" id="CLU_041217_21_3_1"/>
<dbReference type="InParanoid" id="Q29HY3"/>
<dbReference type="OMA" id="GDEPYTF"/>
<dbReference type="PhylomeDB" id="Q29HY3"/>
<dbReference type="ChiTaRS" id="Cdc42">
    <property type="organism name" value="fly"/>
</dbReference>
<dbReference type="Proteomes" id="UP000001819">
    <property type="component" value="Chromosome X"/>
</dbReference>
<dbReference type="Bgee" id="FBgn0071730">
    <property type="expression patterns" value="Expressed in female reproductive system and 2 other cell types or tissues"/>
</dbReference>
<dbReference type="GO" id="GO:0005912">
    <property type="term" value="C:adherens junction"/>
    <property type="evidence" value="ECO:0007669"/>
    <property type="project" value="UniProtKB-SubCell"/>
</dbReference>
<dbReference type="GO" id="GO:0005737">
    <property type="term" value="C:cytoplasm"/>
    <property type="evidence" value="ECO:0007669"/>
    <property type="project" value="UniProtKB-ARBA"/>
</dbReference>
<dbReference type="GO" id="GO:0005886">
    <property type="term" value="C:plasma membrane"/>
    <property type="evidence" value="ECO:0007669"/>
    <property type="project" value="UniProtKB-SubCell"/>
</dbReference>
<dbReference type="GO" id="GO:0003925">
    <property type="term" value="F:G protein activity"/>
    <property type="evidence" value="ECO:0007669"/>
    <property type="project" value="UniProtKB-EC"/>
</dbReference>
<dbReference type="GO" id="GO:0005525">
    <property type="term" value="F:GTP binding"/>
    <property type="evidence" value="ECO:0007669"/>
    <property type="project" value="UniProtKB-KW"/>
</dbReference>
<dbReference type="GO" id="GO:0001667">
    <property type="term" value="P:ameboidal-type cell migration"/>
    <property type="evidence" value="ECO:0007669"/>
    <property type="project" value="UniProtKB-ARBA"/>
</dbReference>
<dbReference type="GO" id="GO:0009653">
    <property type="term" value="P:anatomical structure morphogenesis"/>
    <property type="evidence" value="ECO:0007669"/>
    <property type="project" value="UniProtKB-ARBA"/>
</dbReference>
<dbReference type="GO" id="GO:0022412">
    <property type="term" value="P:cellular process involved in reproduction in multicellular organism"/>
    <property type="evidence" value="ECO:0007669"/>
    <property type="project" value="UniProtKB-ARBA"/>
</dbReference>
<dbReference type="GO" id="GO:0003006">
    <property type="term" value="P:developmental process involved in reproduction"/>
    <property type="evidence" value="ECO:0007669"/>
    <property type="project" value="UniProtKB-ARBA"/>
</dbReference>
<dbReference type="GO" id="GO:0060429">
    <property type="term" value="P:epithelium development"/>
    <property type="evidence" value="ECO:0007669"/>
    <property type="project" value="UniProtKB-ARBA"/>
</dbReference>
<dbReference type="GO" id="GO:0035099">
    <property type="term" value="P:hemocyte migration"/>
    <property type="evidence" value="ECO:0007669"/>
    <property type="project" value="UniProtKB-ARBA"/>
</dbReference>
<dbReference type="GO" id="GO:0045185">
    <property type="term" value="P:maintenance of protein location"/>
    <property type="evidence" value="ECO:0000250"/>
    <property type="project" value="UniProtKB"/>
</dbReference>
<dbReference type="GO" id="GO:0035006">
    <property type="term" value="P:melanization defense response"/>
    <property type="evidence" value="ECO:0007669"/>
    <property type="project" value="UniProtKB-ARBA"/>
</dbReference>
<dbReference type="GO" id="GO:0051130">
    <property type="term" value="P:positive regulation of cellular component organization"/>
    <property type="evidence" value="ECO:0007669"/>
    <property type="project" value="UniProtKB-ARBA"/>
</dbReference>
<dbReference type="GO" id="GO:0045860">
    <property type="term" value="P:positive regulation of protein kinase activity"/>
    <property type="evidence" value="ECO:0000250"/>
    <property type="project" value="UniProtKB"/>
</dbReference>
<dbReference type="GO" id="GO:0007264">
    <property type="term" value="P:small GTPase-mediated signal transduction"/>
    <property type="evidence" value="ECO:0007669"/>
    <property type="project" value="InterPro"/>
</dbReference>
<dbReference type="CDD" id="cd01874">
    <property type="entry name" value="Cdc42"/>
    <property type="match status" value="1"/>
</dbReference>
<dbReference type="FunFam" id="3.40.50.300:FF:000167">
    <property type="entry name" value="Cell division control protein 42 homolog"/>
    <property type="match status" value="1"/>
</dbReference>
<dbReference type="Gene3D" id="3.40.50.300">
    <property type="entry name" value="P-loop containing nucleotide triphosphate hydrolases"/>
    <property type="match status" value="1"/>
</dbReference>
<dbReference type="InterPro" id="IPR037874">
    <property type="entry name" value="Cdc42"/>
</dbReference>
<dbReference type="InterPro" id="IPR027417">
    <property type="entry name" value="P-loop_NTPase"/>
</dbReference>
<dbReference type="InterPro" id="IPR005225">
    <property type="entry name" value="Small_GTP-bd"/>
</dbReference>
<dbReference type="InterPro" id="IPR001806">
    <property type="entry name" value="Small_GTPase"/>
</dbReference>
<dbReference type="InterPro" id="IPR003578">
    <property type="entry name" value="Small_GTPase_Rho"/>
</dbReference>
<dbReference type="NCBIfam" id="TIGR00231">
    <property type="entry name" value="small_GTP"/>
    <property type="match status" value="1"/>
</dbReference>
<dbReference type="PANTHER" id="PTHR24072">
    <property type="entry name" value="RHO FAMILY GTPASE"/>
    <property type="match status" value="1"/>
</dbReference>
<dbReference type="Pfam" id="PF00071">
    <property type="entry name" value="Ras"/>
    <property type="match status" value="1"/>
</dbReference>
<dbReference type="PRINTS" id="PR00449">
    <property type="entry name" value="RASTRNSFRMNG"/>
</dbReference>
<dbReference type="SMART" id="SM00175">
    <property type="entry name" value="RAB"/>
    <property type="match status" value="1"/>
</dbReference>
<dbReference type="SMART" id="SM00173">
    <property type="entry name" value="RAS"/>
    <property type="match status" value="1"/>
</dbReference>
<dbReference type="SMART" id="SM00174">
    <property type="entry name" value="RHO"/>
    <property type="match status" value="1"/>
</dbReference>
<dbReference type="SUPFAM" id="SSF52540">
    <property type="entry name" value="P-loop containing nucleoside triphosphate hydrolases"/>
    <property type="match status" value="1"/>
</dbReference>
<dbReference type="PROSITE" id="PS51420">
    <property type="entry name" value="RHO"/>
    <property type="match status" value="1"/>
</dbReference>
<sequence>MQTIKCVVVGDGAVGKTCLLISYTTNKFPSEYVPTVFDNYAVTVMIGGEPYTLGLFDTAGQEDYDRLRPLSYPQTDVFLVCFSVVSPSSFENVKEKWVPEITHHCQKTPFLLVGTQIDLRDETSTLEKLAKNKQKPITMEQGEKLAKELKAVKYVECSALTQKGLKNVFDEAILAALEPPEPTKKRKCKFL</sequence>
<accession>Q29HY3</accession>
<evidence type="ECO:0000250" key="1"/>
<evidence type="ECO:0000250" key="2">
    <source>
        <dbReference type="UniProtKB" id="P40793"/>
    </source>
</evidence>
<evidence type="ECO:0000250" key="3">
    <source>
        <dbReference type="UniProtKB" id="P60766"/>
    </source>
</evidence>
<evidence type="ECO:0000250" key="4">
    <source>
        <dbReference type="UniProtKB" id="P60953"/>
    </source>
</evidence>
<evidence type="ECO:0000250" key="5">
    <source>
        <dbReference type="UniProtKB" id="P61585"/>
    </source>
</evidence>
<evidence type="ECO:0000255" key="6"/>
<evidence type="ECO:0000305" key="7"/>
<evidence type="ECO:0000312" key="8">
    <source>
        <dbReference type="EMBL" id="EAL31624.1"/>
    </source>
</evidence>
<comment type="function">
    <text evidence="2">Regulates mbt kinase activity and is also required to recruit mbt to adherens junctions. Together with mbt, regulates photoreceptor cell morphogenesis (By similarity).</text>
</comment>
<comment type="catalytic activity">
    <reaction evidence="3 4">
        <text>GTP + H2O = GDP + phosphate + H(+)</text>
        <dbReference type="Rhea" id="RHEA:19669"/>
        <dbReference type="ChEBI" id="CHEBI:15377"/>
        <dbReference type="ChEBI" id="CHEBI:15378"/>
        <dbReference type="ChEBI" id="CHEBI:37565"/>
        <dbReference type="ChEBI" id="CHEBI:43474"/>
        <dbReference type="ChEBI" id="CHEBI:58189"/>
        <dbReference type="EC" id="3.6.5.2"/>
    </reaction>
</comment>
<comment type="subcellular location">
    <subcellularLocation>
        <location evidence="2">Cell junction</location>
        <location evidence="2">Adherens junction</location>
    </subcellularLocation>
    <subcellularLocation>
        <location evidence="1">Cell membrane</location>
        <topology evidence="2">Lipid-anchor</topology>
    </subcellularLocation>
</comment>
<comment type="similarity">
    <text evidence="6">Belongs to the small GTPase superfamily. Rho family. CDC42 subfamily.</text>
</comment>
<comment type="sequence caution" evidence="7">
    <conflict type="erroneous gene model prediction">
        <sequence resource="EMBL-CDS" id="EAL31624"/>
    </conflict>
</comment>
<name>CDC42_DROPS</name>
<proteinExistence type="inferred from homology"/>
<organism>
    <name type="scientific">Drosophila pseudoobscura pseudoobscura</name>
    <name type="common">Fruit fly</name>
    <dbReference type="NCBI Taxonomy" id="46245"/>
    <lineage>
        <taxon>Eukaryota</taxon>
        <taxon>Metazoa</taxon>
        <taxon>Ecdysozoa</taxon>
        <taxon>Arthropoda</taxon>
        <taxon>Hexapoda</taxon>
        <taxon>Insecta</taxon>
        <taxon>Pterygota</taxon>
        <taxon>Neoptera</taxon>
        <taxon>Endopterygota</taxon>
        <taxon>Diptera</taxon>
        <taxon>Brachycera</taxon>
        <taxon>Muscomorpha</taxon>
        <taxon>Ephydroidea</taxon>
        <taxon>Drosophilidae</taxon>
        <taxon>Drosophila</taxon>
        <taxon>Sophophora</taxon>
    </lineage>
</organism>
<gene>
    <name evidence="2" type="primary">Cdc42</name>
    <name type="ORF">GA11680</name>
</gene>
<keyword id="KW-0965">Cell junction</keyword>
<keyword id="KW-1003">Cell membrane</keyword>
<keyword id="KW-0217">Developmental protein</keyword>
<keyword id="KW-0342">GTP-binding</keyword>
<keyword id="KW-0378">Hydrolase</keyword>
<keyword id="KW-0449">Lipoprotein</keyword>
<keyword id="KW-0472">Membrane</keyword>
<keyword id="KW-0488">Methylation</keyword>
<keyword id="KW-0547">Nucleotide-binding</keyword>
<keyword id="KW-0636">Prenylation</keyword>
<keyword id="KW-1185">Reference proteome</keyword>
<reference evidence="8" key="1">
    <citation type="journal article" date="2005" name="Genome Res.">
        <title>Comparative genome sequencing of Drosophila pseudoobscura: chromosomal, gene, and cis-element evolution.</title>
        <authorList>
            <person name="Richards S."/>
            <person name="Liu Y."/>
            <person name="Bettencourt B.R."/>
            <person name="Hradecky P."/>
            <person name="Letovsky S."/>
            <person name="Nielsen R."/>
            <person name="Thornton K."/>
            <person name="Hubisz M.J."/>
            <person name="Chen R."/>
            <person name="Meisel R.P."/>
            <person name="Couronne O."/>
            <person name="Hua S."/>
            <person name="Smith M.A."/>
            <person name="Zhang P."/>
            <person name="Liu J."/>
            <person name="Bussemaker H.J."/>
            <person name="van Batenburg M.F."/>
            <person name="Howells S.L."/>
            <person name="Scherer S.E."/>
            <person name="Sodergren E."/>
            <person name="Matthews B.B."/>
            <person name="Crosby M.A."/>
            <person name="Schroeder A.J."/>
            <person name="Ortiz-Barrientos D."/>
            <person name="Rives C.M."/>
            <person name="Metzker M.L."/>
            <person name="Muzny D.M."/>
            <person name="Scott G."/>
            <person name="Steffen D."/>
            <person name="Wheeler D.A."/>
            <person name="Worley K.C."/>
            <person name="Havlak P."/>
            <person name="Durbin K.J."/>
            <person name="Egan A."/>
            <person name="Gill R."/>
            <person name="Hume J."/>
            <person name="Morgan M.B."/>
            <person name="Miner G."/>
            <person name="Hamilton C."/>
            <person name="Huang Y."/>
            <person name="Waldron L."/>
            <person name="Verduzco D."/>
            <person name="Clerc-Blankenburg K.P."/>
            <person name="Dubchak I."/>
            <person name="Noor M.A.F."/>
            <person name="Anderson W."/>
            <person name="White K.P."/>
            <person name="Clark A.G."/>
            <person name="Schaeffer S.W."/>
            <person name="Gelbart W.M."/>
            <person name="Weinstock G.M."/>
            <person name="Gibbs R.A."/>
        </authorList>
    </citation>
    <scope>NUCLEOTIDE SEQUENCE [LARGE SCALE GENOMIC DNA]</scope>
    <source>
        <strain>MV2-25 / Tucson 14011-0121.94</strain>
    </source>
</reference>